<reference key="1">
    <citation type="journal article" date="2006" name="Theor. Appl. Genet.">
        <title>Complete chloroplast genome sequences of Solanum bulbocastanum, Solanum lycopersicum and comparative analyses with other Solanaceae genomes.</title>
        <authorList>
            <person name="Daniell H."/>
            <person name="Lee S.-B."/>
            <person name="Grevich J."/>
            <person name="Saski C."/>
            <person name="Quesada-Vargas T."/>
            <person name="Guda C."/>
            <person name="Tomkins J."/>
            <person name="Jansen R.K."/>
        </authorList>
    </citation>
    <scope>NUCLEOTIDE SEQUENCE [LARGE SCALE GENOMIC DNA]</scope>
    <source>
        <strain>cv. LA3023</strain>
    </source>
</reference>
<reference key="2">
    <citation type="journal article" date="2006" name="J. Mol. Evol.">
        <title>Sequence of the tomato chloroplast DNA and evolutionary comparison of solanaceous plastid genomes.</title>
        <authorList>
            <person name="Kahlau S."/>
            <person name="Aspinall S."/>
            <person name="Gray J.C."/>
            <person name="Bock R."/>
        </authorList>
    </citation>
    <scope>NUCLEOTIDE SEQUENCE [LARGE SCALE GENOMIC DNA]</scope>
    <source>
        <strain>cv. IPA-6</strain>
    </source>
</reference>
<comment type="function">
    <text evidence="1">Key component of the proton channel; it plays a direct role in the translocation of protons across the membrane.</text>
</comment>
<comment type="subunit">
    <text evidence="1">F-type ATPases have 2 components, CF(1) - the catalytic core - and CF(0) - the membrane proton channel. CF(1) has five subunits: alpha(3), beta(3), gamma(1), delta(1), epsilon(1). CF(0) has four main subunits: a, b, b' and c.</text>
</comment>
<comment type="subcellular location">
    <subcellularLocation>
        <location evidence="1">Plastid</location>
        <location evidence="1">Chloroplast thylakoid membrane</location>
        <topology evidence="1">Multi-pass membrane protein</topology>
    </subcellularLocation>
</comment>
<comment type="similarity">
    <text evidence="1">Belongs to the ATPase A chain family.</text>
</comment>
<proteinExistence type="inferred from homology"/>
<feature type="chain" id="PRO_0000277424" description="ATP synthase subunit a, chloroplastic">
    <location>
        <begin position="1"/>
        <end position="247"/>
    </location>
</feature>
<feature type="transmembrane region" description="Helical" evidence="1">
    <location>
        <begin position="38"/>
        <end position="58"/>
    </location>
</feature>
<feature type="transmembrane region" description="Helical" evidence="1">
    <location>
        <begin position="95"/>
        <end position="115"/>
    </location>
</feature>
<feature type="transmembrane region" description="Helical" evidence="1">
    <location>
        <begin position="134"/>
        <end position="154"/>
    </location>
</feature>
<feature type="transmembrane region" description="Helical" evidence="1">
    <location>
        <begin position="199"/>
        <end position="219"/>
    </location>
</feature>
<feature type="transmembrane region" description="Helical" evidence="1">
    <location>
        <begin position="220"/>
        <end position="240"/>
    </location>
</feature>
<organism>
    <name type="scientific">Solanum lycopersicum</name>
    <name type="common">Tomato</name>
    <name type="synonym">Lycopersicon esculentum</name>
    <dbReference type="NCBI Taxonomy" id="4081"/>
    <lineage>
        <taxon>Eukaryota</taxon>
        <taxon>Viridiplantae</taxon>
        <taxon>Streptophyta</taxon>
        <taxon>Embryophyta</taxon>
        <taxon>Tracheophyta</taxon>
        <taxon>Spermatophyta</taxon>
        <taxon>Magnoliopsida</taxon>
        <taxon>eudicotyledons</taxon>
        <taxon>Gunneridae</taxon>
        <taxon>Pentapetalae</taxon>
        <taxon>asterids</taxon>
        <taxon>lamiids</taxon>
        <taxon>Solanales</taxon>
        <taxon>Solanaceae</taxon>
        <taxon>Solanoideae</taxon>
        <taxon>Solaneae</taxon>
        <taxon>Solanum</taxon>
        <taxon>Solanum subgen. Lycopersicon</taxon>
    </lineage>
</organism>
<keyword id="KW-0066">ATP synthesis</keyword>
<keyword id="KW-0138">CF(0)</keyword>
<keyword id="KW-0150">Chloroplast</keyword>
<keyword id="KW-0375">Hydrogen ion transport</keyword>
<keyword id="KW-0406">Ion transport</keyword>
<keyword id="KW-0472">Membrane</keyword>
<keyword id="KW-0934">Plastid</keyword>
<keyword id="KW-1185">Reference proteome</keyword>
<keyword id="KW-0793">Thylakoid</keyword>
<keyword id="KW-0812">Transmembrane</keyword>
<keyword id="KW-1133">Transmembrane helix</keyword>
<keyword id="KW-0813">Transport</keyword>
<sequence length="247" mass="27031">MNVLSCSINTLKGLYDISGVEVGQHFYWQIGGFQVHGQVLITSWVVIAILLGSATIAVRNPQTIPTGGQNFFEYVLEFIRDVSKTQIGEEYGPWVPFIGTMFLFIFVSNWSGALLPWKIIQLPHGELAAPTNDINTTVALALLTSVAYFYAGLTKRGLGYFGKYIQPTPILLPINILEDFTKPLSLSFRLFGNILADELVVVVLVSLVPLVVPIPVMLLGLFTSGIQALIFATLAAAYIGESMEGHH</sequence>
<dbReference type="EMBL" id="DQ347959">
    <property type="protein sequence ID" value="ABC56288.1"/>
    <property type="molecule type" value="Genomic_DNA"/>
</dbReference>
<dbReference type="EMBL" id="AM087200">
    <property type="protein sequence ID" value="CAJ32381.1"/>
    <property type="molecule type" value="Genomic_DNA"/>
</dbReference>
<dbReference type="RefSeq" id="AP_004916.1">
    <property type="nucleotide sequence ID" value="AC_000188.1"/>
</dbReference>
<dbReference type="RefSeq" id="YP_008563076.1">
    <property type="nucleotide sequence ID" value="NC_007898.3"/>
</dbReference>
<dbReference type="SMR" id="Q2MIB2"/>
<dbReference type="FunCoup" id="Q2MIB2">
    <property type="interactions" value="138"/>
</dbReference>
<dbReference type="STRING" id="4081.Q2MIB2"/>
<dbReference type="PaxDb" id="4081-Solyc10g052790.1.1"/>
<dbReference type="GeneID" id="3950464"/>
<dbReference type="KEGG" id="sly:3950464"/>
<dbReference type="eggNOG" id="KOG4665">
    <property type="taxonomic scope" value="Eukaryota"/>
</dbReference>
<dbReference type="InParanoid" id="Q2MIB2"/>
<dbReference type="OrthoDB" id="2303at2759"/>
<dbReference type="Proteomes" id="UP000004994">
    <property type="component" value="Chloroplast"/>
</dbReference>
<dbReference type="ExpressionAtlas" id="Q2MIB2">
    <property type="expression patterns" value="baseline"/>
</dbReference>
<dbReference type="GO" id="GO:0009535">
    <property type="term" value="C:chloroplast thylakoid membrane"/>
    <property type="evidence" value="ECO:0007669"/>
    <property type="project" value="UniProtKB-SubCell"/>
</dbReference>
<dbReference type="GO" id="GO:0005886">
    <property type="term" value="C:plasma membrane"/>
    <property type="evidence" value="ECO:0007669"/>
    <property type="project" value="UniProtKB-UniRule"/>
</dbReference>
<dbReference type="GO" id="GO:0045259">
    <property type="term" value="C:proton-transporting ATP synthase complex"/>
    <property type="evidence" value="ECO:0007669"/>
    <property type="project" value="UniProtKB-KW"/>
</dbReference>
<dbReference type="GO" id="GO:0046933">
    <property type="term" value="F:proton-transporting ATP synthase activity, rotational mechanism"/>
    <property type="evidence" value="ECO:0007669"/>
    <property type="project" value="UniProtKB-UniRule"/>
</dbReference>
<dbReference type="CDD" id="cd00310">
    <property type="entry name" value="ATP-synt_Fo_a_6"/>
    <property type="match status" value="1"/>
</dbReference>
<dbReference type="FunFam" id="1.20.120.220:FF:000001">
    <property type="entry name" value="ATP synthase subunit a, chloroplastic"/>
    <property type="match status" value="1"/>
</dbReference>
<dbReference type="Gene3D" id="1.20.120.220">
    <property type="entry name" value="ATP synthase, F0 complex, subunit A"/>
    <property type="match status" value="1"/>
</dbReference>
<dbReference type="HAMAP" id="MF_01393">
    <property type="entry name" value="ATP_synth_a_bact"/>
    <property type="match status" value="1"/>
</dbReference>
<dbReference type="InterPro" id="IPR045082">
    <property type="entry name" value="ATP_syn_F0_a_bact/chloroplast"/>
</dbReference>
<dbReference type="InterPro" id="IPR000568">
    <property type="entry name" value="ATP_synth_F0_asu"/>
</dbReference>
<dbReference type="InterPro" id="IPR023011">
    <property type="entry name" value="ATP_synth_F0_asu_AS"/>
</dbReference>
<dbReference type="InterPro" id="IPR035908">
    <property type="entry name" value="F0_ATP_A_sf"/>
</dbReference>
<dbReference type="NCBIfam" id="TIGR01131">
    <property type="entry name" value="ATP_synt_6_or_A"/>
    <property type="match status" value="1"/>
</dbReference>
<dbReference type="PANTHER" id="PTHR42823">
    <property type="entry name" value="ATP SYNTHASE SUBUNIT A, CHLOROPLASTIC"/>
    <property type="match status" value="1"/>
</dbReference>
<dbReference type="PANTHER" id="PTHR42823:SF3">
    <property type="entry name" value="ATP SYNTHASE SUBUNIT A, CHLOROPLASTIC"/>
    <property type="match status" value="1"/>
</dbReference>
<dbReference type="Pfam" id="PF00119">
    <property type="entry name" value="ATP-synt_A"/>
    <property type="match status" value="1"/>
</dbReference>
<dbReference type="PRINTS" id="PR00123">
    <property type="entry name" value="ATPASEA"/>
</dbReference>
<dbReference type="SUPFAM" id="SSF81336">
    <property type="entry name" value="F1F0 ATP synthase subunit A"/>
    <property type="match status" value="1"/>
</dbReference>
<dbReference type="PROSITE" id="PS00449">
    <property type="entry name" value="ATPASE_A"/>
    <property type="match status" value="1"/>
</dbReference>
<geneLocation type="chloroplast"/>
<gene>
    <name evidence="1" type="primary">atpI</name>
</gene>
<name>ATPI_SOLLC</name>
<accession>Q2MIB2</accession>
<protein>
    <recommendedName>
        <fullName evidence="1">ATP synthase subunit a, chloroplastic</fullName>
    </recommendedName>
    <alternativeName>
        <fullName evidence="1">ATP synthase F0 sector subunit a</fullName>
    </alternativeName>
    <alternativeName>
        <fullName evidence="1">F-ATPase subunit IV</fullName>
    </alternativeName>
</protein>
<evidence type="ECO:0000255" key="1">
    <source>
        <dbReference type="HAMAP-Rule" id="MF_01393"/>
    </source>
</evidence>